<dbReference type="EC" id="1.14.13.127" evidence="1"/>
<dbReference type="EMBL" id="CP000460">
    <property type="protein sequence ID" value="ABK13451.1"/>
    <property type="molecule type" value="Genomic_DNA"/>
</dbReference>
<dbReference type="RefSeq" id="WP_011549881.1">
    <property type="nucleotide sequence ID" value="NC_008544.1"/>
</dbReference>
<dbReference type="SMR" id="A0KE38"/>
<dbReference type="KEGG" id="bch:Bcen2424_6722"/>
<dbReference type="HOGENOM" id="CLU_009665_20_2_4"/>
<dbReference type="UniPathway" id="UPA00714"/>
<dbReference type="GO" id="GO:0008688">
    <property type="term" value="F:3-(3-hydroxyphenyl)propionate hydroxylase activity"/>
    <property type="evidence" value="ECO:0007669"/>
    <property type="project" value="UniProtKB-UniRule"/>
</dbReference>
<dbReference type="GO" id="GO:0071949">
    <property type="term" value="F:FAD binding"/>
    <property type="evidence" value="ECO:0007669"/>
    <property type="project" value="InterPro"/>
</dbReference>
<dbReference type="GO" id="GO:0019622">
    <property type="term" value="P:3-(3-hydroxy)phenylpropionate catabolic process"/>
    <property type="evidence" value="ECO:0007669"/>
    <property type="project" value="UniProtKB-UniRule"/>
</dbReference>
<dbReference type="GO" id="GO:0019380">
    <property type="term" value="P:3-phenylpropionate catabolic process"/>
    <property type="evidence" value="ECO:0007669"/>
    <property type="project" value="UniProtKB-UniPathway"/>
</dbReference>
<dbReference type="Gene3D" id="3.30.70.2450">
    <property type="match status" value="1"/>
</dbReference>
<dbReference type="Gene3D" id="3.50.50.60">
    <property type="entry name" value="FAD/NAD(P)-binding domain"/>
    <property type="match status" value="1"/>
</dbReference>
<dbReference type="HAMAP" id="MF_01652">
    <property type="entry name" value="MhpA"/>
    <property type="match status" value="1"/>
</dbReference>
<dbReference type="InterPro" id="IPR023786">
    <property type="entry name" value="3-HPP/3HCI_hydroxylase"/>
</dbReference>
<dbReference type="InterPro" id="IPR002938">
    <property type="entry name" value="FAD-bd"/>
</dbReference>
<dbReference type="InterPro" id="IPR036188">
    <property type="entry name" value="FAD/NAD-bd_sf"/>
</dbReference>
<dbReference type="InterPro" id="IPR050631">
    <property type="entry name" value="PheA/TfdB_FAD_monoxygenase"/>
</dbReference>
<dbReference type="NCBIfam" id="NF004829">
    <property type="entry name" value="PRK06183.1-3"/>
    <property type="match status" value="1"/>
</dbReference>
<dbReference type="NCBIfam" id="NF004831">
    <property type="entry name" value="PRK06183.1-5"/>
    <property type="match status" value="1"/>
</dbReference>
<dbReference type="PANTHER" id="PTHR43476">
    <property type="entry name" value="3-(3-HYDROXY-PHENYL)PROPIONATE/3-HYDROXYCINNAMIC ACID HYDROXYLASE"/>
    <property type="match status" value="1"/>
</dbReference>
<dbReference type="PANTHER" id="PTHR43476:SF3">
    <property type="entry name" value="FAD-BINDING MONOOXYGENASE"/>
    <property type="match status" value="1"/>
</dbReference>
<dbReference type="Pfam" id="PF01494">
    <property type="entry name" value="FAD_binding_3"/>
    <property type="match status" value="1"/>
</dbReference>
<dbReference type="PRINTS" id="PR00420">
    <property type="entry name" value="RNGMNOXGNASE"/>
</dbReference>
<dbReference type="SUPFAM" id="SSF51905">
    <property type="entry name" value="FAD/NAD(P)-binding domain"/>
    <property type="match status" value="1"/>
</dbReference>
<proteinExistence type="inferred from homology"/>
<reference key="1">
    <citation type="submission" date="2006-08" db="EMBL/GenBank/DDBJ databases">
        <title>Complete sequence of chromosome 3 of Burkholderia cenocepacia HI2424.</title>
        <authorList>
            <person name="Copeland A."/>
            <person name="Lucas S."/>
            <person name="Lapidus A."/>
            <person name="Barry K."/>
            <person name="Detter J.C."/>
            <person name="Glavina del Rio T."/>
            <person name="Hammon N."/>
            <person name="Israni S."/>
            <person name="Pitluck S."/>
            <person name="Chain P."/>
            <person name="Malfatti S."/>
            <person name="Shin M."/>
            <person name="Vergez L."/>
            <person name="Schmutz J."/>
            <person name="Larimer F."/>
            <person name="Land M."/>
            <person name="Hauser L."/>
            <person name="Kyrpides N."/>
            <person name="Kim E."/>
            <person name="LiPuma J.J."/>
            <person name="Gonzalez C.F."/>
            <person name="Konstantinidis K."/>
            <person name="Tiedje J.M."/>
            <person name="Richardson P."/>
        </authorList>
    </citation>
    <scope>NUCLEOTIDE SEQUENCE [LARGE SCALE GENOMIC DNA]</scope>
    <source>
        <strain>HI2424</strain>
    </source>
</reference>
<comment type="function">
    <text evidence="1">Catalyzes the insertion of one atom of molecular oxygen into position 2 of the phenyl ring of 3-(3-hydroxyphenyl)propionate (3-HPP) and hydroxycinnamic acid (3HCI).</text>
</comment>
<comment type="catalytic activity">
    <reaction evidence="1">
        <text>3-(3-hydroxyphenyl)propanoate + NADH + O2 + H(+) = 3-(2,3-dihydroxyphenyl)propanoate + NAD(+) + H2O</text>
        <dbReference type="Rhea" id="RHEA:24785"/>
        <dbReference type="ChEBI" id="CHEBI:15377"/>
        <dbReference type="ChEBI" id="CHEBI:15378"/>
        <dbReference type="ChEBI" id="CHEBI:15379"/>
        <dbReference type="ChEBI" id="CHEBI:46951"/>
        <dbReference type="ChEBI" id="CHEBI:57277"/>
        <dbReference type="ChEBI" id="CHEBI:57540"/>
        <dbReference type="ChEBI" id="CHEBI:57945"/>
        <dbReference type="EC" id="1.14.13.127"/>
    </reaction>
</comment>
<comment type="catalytic activity">
    <reaction evidence="1">
        <text>(2E)-3-(3-hydroxyphenyl)prop-2-enoate + NADH + O2 + H(+) = (2E)-3-(2,3-dihydroxyphenyl)prop-2-enoate + NAD(+) + H2O</text>
        <dbReference type="Rhea" id="RHEA:27846"/>
        <dbReference type="ChEBI" id="CHEBI:15377"/>
        <dbReference type="ChEBI" id="CHEBI:15378"/>
        <dbReference type="ChEBI" id="CHEBI:15379"/>
        <dbReference type="ChEBI" id="CHEBI:47928"/>
        <dbReference type="ChEBI" id="CHEBI:57540"/>
        <dbReference type="ChEBI" id="CHEBI:57945"/>
        <dbReference type="ChEBI" id="CHEBI:58642"/>
        <dbReference type="EC" id="1.14.13.127"/>
    </reaction>
</comment>
<comment type="cofactor">
    <cofactor evidence="1">
        <name>FAD</name>
        <dbReference type="ChEBI" id="CHEBI:57692"/>
    </cofactor>
</comment>
<comment type="pathway">
    <text evidence="1">Aromatic compound metabolism; 3-phenylpropanoate degradation.</text>
</comment>
<comment type="similarity">
    <text evidence="1">Belongs to the PheA/TfdB FAD monooxygenase family.</text>
</comment>
<feature type="chain" id="PRO_5000165258" description="3-(3-hydroxy-phenyl)propionate/3-hydroxycinnamic acid hydroxylase">
    <location>
        <begin position="1"/>
        <end position="542"/>
    </location>
</feature>
<feature type="binding site" evidence="1">
    <location>
        <begin position="10"/>
        <end position="39"/>
    </location>
    <ligand>
        <name>FAD</name>
        <dbReference type="ChEBI" id="CHEBI:57692"/>
    </ligand>
</feature>
<feature type="binding site" evidence="1">
    <location>
        <begin position="278"/>
        <end position="288"/>
    </location>
    <ligand>
        <name>FAD</name>
        <dbReference type="ChEBI" id="CHEBI:57692"/>
    </ligand>
</feature>
<gene>
    <name evidence="1" type="primary">mhpA</name>
    <name type="ordered locus">Bcen2424_6722</name>
</gene>
<sequence>MKANNRNRTSVAIVGAGPNGAAMANLLGLYGVDTIVVERAPQIVEFPRAVGIDDEALRLFQTAGLADELSRDIIQNVPLRMFKANGECFADIRPSIREFGWWRRNIFMQHLAERTLRDALARYPHVSLRTGEEVVGLEQDDECVTLQVRAADGQQYELDADYVVAADGGRSPVREMLGIRLAGTTHPMKWVVVDVKNARLDQPCTALNCDPRRPNVCIYLPFNYRRWEFLVFPHEDEEAIAQPESIRALIAPYVDDVDRIEIVRARTYTHHSRVAERFVAGRVALIGDAAHLSPPWIGQGLNAGLRDVGNLAWKLAGVVNGTLHRRVISTYESERRDHAKAMIDLADTFGAMLMPTSRLVAFLRDRFLGLARYAPGLKDYVLQMRFKPMPSYTHGVVVTGTSDAVGRMIVQPDVETADGARRKLDDVLGPWFAIIGWRCDPQACLSDDDRAFWTALGAKFVQIVRSRSGTCREQRIASAHDSVCVEDVDNAMAEWFDRHAAPLVVVRPDRYVAAQTDAAGMAGVTAAFQAFAARQRETADVC</sequence>
<accession>A0KE38</accession>
<organism>
    <name type="scientific">Burkholderia cenocepacia (strain HI2424)</name>
    <dbReference type="NCBI Taxonomy" id="331272"/>
    <lineage>
        <taxon>Bacteria</taxon>
        <taxon>Pseudomonadati</taxon>
        <taxon>Pseudomonadota</taxon>
        <taxon>Betaproteobacteria</taxon>
        <taxon>Burkholderiales</taxon>
        <taxon>Burkholderiaceae</taxon>
        <taxon>Burkholderia</taxon>
        <taxon>Burkholderia cepacia complex</taxon>
    </lineage>
</organism>
<evidence type="ECO:0000255" key="1">
    <source>
        <dbReference type="HAMAP-Rule" id="MF_01652"/>
    </source>
</evidence>
<name>MHPA_BURCH</name>
<protein>
    <recommendedName>
        <fullName evidence="1">3-(3-hydroxy-phenyl)propionate/3-hydroxycinnamic acid hydroxylase</fullName>
        <shortName evidence="1">3-HCI hydroxylase</shortName>
        <shortName evidence="1">3-HPP hydroxylase</shortName>
        <ecNumber evidence="1">1.14.13.127</ecNumber>
    </recommendedName>
</protein>
<keyword id="KW-0058">Aromatic hydrocarbons catabolism</keyword>
<keyword id="KW-0274">FAD</keyword>
<keyword id="KW-0285">Flavoprotein</keyword>
<keyword id="KW-0520">NAD</keyword>
<keyword id="KW-0560">Oxidoreductase</keyword>